<reference key="1">
    <citation type="journal article" date="2000" name="DNA Res.">
        <title>Complete structure of the chloroplast genome of a legume, Lotus japonicus.</title>
        <authorList>
            <person name="Kato T."/>
            <person name="Kaneko T."/>
            <person name="Sato S."/>
            <person name="Nakamura Y."/>
            <person name="Tabata S."/>
        </authorList>
    </citation>
    <scope>NUCLEOTIDE SEQUENCE [LARGE SCALE GENOMIC DNA]</scope>
    <source>
        <strain>cv. Miyakojima MG-20</strain>
    </source>
</reference>
<geneLocation type="chloroplast"/>
<name>RPOA_LOTJA</name>
<proteinExistence type="inferred from homology"/>
<comment type="function">
    <text evidence="1">DNA-dependent RNA polymerase catalyzes the transcription of DNA into RNA using the four ribonucleoside triphosphates as substrates.</text>
</comment>
<comment type="catalytic activity">
    <reaction evidence="1">
        <text>RNA(n) + a ribonucleoside 5'-triphosphate = RNA(n+1) + diphosphate</text>
        <dbReference type="Rhea" id="RHEA:21248"/>
        <dbReference type="Rhea" id="RHEA-COMP:14527"/>
        <dbReference type="Rhea" id="RHEA-COMP:17342"/>
        <dbReference type="ChEBI" id="CHEBI:33019"/>
        <dbReference type="ChEBI" id="CHEBI:61557"/>
        <dbReference type="ChEBI" id="CHEBI:140395"/>
        <dbReference type="EC" id="2.7.7.6"/>
    </reaction>
</comment>
<comment type="subunit">
    <text evidence="1">In plastids the minimal PEP RNA polymerase catalytic core is composed of four subunits: alpha, beta, beta', and beta''. When a (nuclear-encoded) sigma factor is associated with the core the holoenzyme is formed, which can initiate transcription.</text>
</comment>
<comment type="subcellular location">
    <subcellularLocation>
        <location>Plastid</location>
        <location>Chloroplast</location>
    </subcellularLocation>
</comment>
<comment type="domain">
    <text evidence="1">The N-terminal domain is essential for RNAP assembly and basal transcription, whereas the C-terminal domain is involved in interaction with transcriptional regulators and with upstream promoter elements.</text>
</comment>
<comment type="similarity">
    <text evidence="1">Belongs to the RNA polymerase alpha chain family.</text>
</comment>
<gene>
    <name evidence="1" type="primary">rpoA</name>
</gene>
<feature type="chain" id="PRO_0000175467" description="DNA-directed RNA polymerase subunit alpha">
    <location>
        <begin position="1"/>
        <end position="333"/>
    </location>
</feature>
<feature type="region of interest" description="Alpha N-terminal domain (alpha-NTD)" evidence="1">
    <location>
        <begin position="1"/>
        <end position="233"/>
    </location>
</feature>
<feature type="region of interest" description="Alpha C-terminal domain (alpha-CTD)" evidence="1">
    <location>
        <begin position="266"/>
        <end position="333"/>
    </location>
</feature>
<evidence type="ECO:0000255" key="1">
    <source>
        <dbReference type="HAMAP-Rule" id="MF_00059"/>
    </source>
</evidence>
<organism>
    <name type="scientific">Lotus japonicus</name>
    <name type="common">Lotus corniculatus var. japonicus</name>
    <dbReference type="NCBI Taxonomy" id="34305"/>
    <lineage>
        <taxon>Eukaryota</taxon>
        <taxon>Viridiplantae</taxon>
        <taxon>Streptophyta</taxon>
        <taxon>Embryophyta</taxon>
        <taxon>Tracheophyta</taxon>
        <taxon>Spermatophyta</taxon>
        <taxon>Magnoliopsida</taxon>
        <taxon>eudicotyledons</taxon>
        <taxon>Gunneridae</taxon>
        <taxon>Pentapetalae</taxon>
        <taxon>rosids</taxon>
        <taxon>fabids</taxon>
        <taxon>Fabales</taxon>
        <taxon>Fabaceae</taxon>
        <taxon>Papilionoideae</taxon>
        <taxon>50 kb inversion clade</taxon>
        <taxon>NPAAA clade</taxon>
        <taxon>Hologalegina</taxon>
        <taxon>robinioid clade</taxon>
        <taxon>Loteae</taxon>
        <taxon>Lotus</taxon>
    </lineage>
</organism>
<accession>Q9BBQ4</accession>
<sequence length="333" mass="38483">MVREKVRVSTRTLQWKCVESRIDSKRLYYGRFILSPLMKGQADTIGIAMRRILLGEMEGTCITRAKSEKISHEYSTIVGIQEPVHEILMNLKEIVLKSNLYGIRDASICFKGPGYVTAQNIILPPSVVIVDNTQHIANVTEPIQLCIGLQIERDRGYRINTLKNFQDGSYNIDAIFMPVRNANHSIHSYVNGNEKQEILFLEIWTNGSLTPKEALYEASRNLIDLFIPFLHAEEEKLNFENNEHKVTLPLFTCHDLLAKTKLKKKKKEIAFKSIFIDQLELPPKIYNCLKKSNIHTLLELLTKSKEDLMKIEHFRVEDVKHILDILEIEKHFP</sequence>
<dbReference type="EC" id="2.7.7.6" evidence="1"/>
<dbReference type="EMBL" id="AP002983">
    <property type="protein sequence ID" value="BAB33228.1"/>
    <property type="molecule type" value="Genomic_DNA"/>
</dbReference>
<dbReference type="RefSeq" id="NP_084829.1">
    <property type="nucleotide sequence ID" value="NC_002694.1"/>
</dbReference>
<dbReference type="SMR" id="Q9BBQ4"/>
<dbReference type="GeneID" id="802948"/>
<dbReference type="GO" id="GO:0009507">
    <property type="term" value="C:chloroplast"/>
    <property type="evidence" value="ECO:0007669"/>
    <property type="project" value="UniProtKB-SubCell"/>
</dbReference>
<dbReference type="GO" id="GO:0000428">
    <property type="term" value="C:DNA-directed RNA polymerase complex"/>
    <property type="evidence" value="ECO:0007669"/>
    <property type="project" value="UniProtKB-KW"/>
</dbReference>
<dbReference type="GO" id="GO:0005739">
    <property type="term" value="C:mitochondrion"/>
    <property type="evidence" value="ECO:0007669"/>
    <property type="project" value="GOC"/>
</dbReference>
<dbReference type="GO" id="GO:0003677">
    <property type="term" value="F:DNA binding"/>
    <property type="evidence" value="ECO:0007669"/>
    <property type="project" value="UniProtKB-UniRule"/>
</dbReference>
<dbReference type="GO" id="GO:0003899">
    <property type="term" value="F:DNA-directed RNA polymerase activity"/>
    <property type="evidence" value="ECO:0007669"/>
    <property type="project" value="UniProtKB-UniRule"/>
</dbReference>
<dbReference type="GO" id="GO:0046983">
    <property type="term" value="F:protein dimerization activity"/>
    <property type="evidence" value="ECO:0007669"/>
    <property type="project" value="InterPro"/>
</dbReference>
<dbReference type="GO" id="GO:0006351">
    <property type="term" value="P:DNA-templated transcription"/>
    <property type="evidence" value="ECO:0007669"/>
    <property type="project" value="UniProtKB-UniRule"/>
</dbReference>
<dbReference type="CDD" id="cd06928">
    <property type="entry name" value="RNAP_alpha_NTD"/>
    <property type="match status" value="1"/>
</dbReference>
<dbReference type="FunFam" id="2.170.120.12:FF:000001">
    <property type="entry name" value="DNA-directed RNA polymerase subunit alpha"/>
    <property type="match status" value="1"/>
</dbReference>
<dbReference type="Gene3D" id="1.10.150.20">
    <property type="entry name" value="5' to 3' exonuclease, C-terminal subdomain"/>
    <property type="match status" value="1"/>
</dbReference>
<dbReference type="Gene3D" id="2.170.120.12">
    <property type="entry name" value="DNA-directed RNA polymerase, insert domain"/>
    <property type="match status" value="1"/>
</dbReference>
<dbReference type="Gene3D" id="3.30.1360.10">
    <property type="entry name" value="RNA polymerase, RBP11-like subunit"/>
    <property type="match status" value="1"/>
</dbReference>
<dbReference type="HAMAP" id="MF_00059">
    <property type="entry name" value="RNApol_bact_RpoA"/>
    <property type="match status" value="1"/>
</dbReference>
<dbReference type="InterPro" id="IPR011262">
    <property type="entry name" value="DNA-dir_RNA_pol_insert"/>
</dbReference>
<dbReference type="InterPro" id="IPR011263">
    <property type="entry name" value="DNA-dir_RNA_pol_RpoA/D/Rpb3"/>
</dbReference>
<dbReference type="InterPro" id="IPR011773">
    <property type="entry name" value="DNA-dir_RpoA"/>
</dbReference>
<dbReference type="InterPro" id="IPR036603">
    <property type="entry name" value="RBP11-like"/>
</dbReference>
<dbReference type="InterPro" id="IPR011260">
    <property type="entry name" value="RNAP_asu_C"/>
</dbReference>
<dbReference type="InterPro" id="IPR036643">
    <property type="entry name" value="RNApol_insert_sf"/>
</dbReference>
<dbReference type="NCBIfam" id="TIGR02027">
    <property type="entry name" value="rpoA"/>
    <property type="match status" value="1"/>
</dbReference>
<dbReference type="Pfam" id="PF01000">
    <property type="entry name" value="RNA_pol_A_bac"/>
    <property type="match status" value="1"/>
</dbReference>
<dbReference type="Pfam" id="PF03118">
    <property type="entry name" value="RNA_pol_A_CTD"/>
    <property type="match status" value="1"/>
</dbReference>
<dbReference type="Pfam" id="PF01193">
    <property type="entry name" value="RNA_pol_L"/>
    <property type="match status" value="1"/>
</dbReference>
<dbReference type="SMART" id="SM00662">
    <property type="entry name" value="RPOLD"/>
    <property type="match status" value="1"/>
</dbReference>
<dbReference type="SUPFAM" id="SSF47789">
    <property type="entry name" value="C-terminal domain of RNA polymerase alpha subunit"/>
    <property type="match status" value="1"/>
</dbReference>
<dbReference type="SUPFAM" id="SSF56553">
    <property type="entry name" value="Insert subdomain of RNA polymerase alpha subunit"/>
    <property type="match status" value="1"/>
</dbReference>
<dbReference type="SUPFAM" id="SSF55257">
    <property type="entry name" value="RBP11-like subunits of RNA polymerase"/>
    <property type="match status" value="1"/>
</dbReference>
<keyword id="KW-0150">Chloroplast</keyword>
<keyword id="KW-0240">DNA-directed RNA polymerase</keyword>
<keyword id="KW-0548">Nucleotidyltransferase</keyword>
<keyword id="KW-0934">Plastid</keyword>
<keyword id="KW-0804">Transcription</keyword>
<keyword id="KW-0808">Transferase</keyword>
<protein>
    <recommendedName>
        <fullName evidence="1">DNA-directed RNA polymerase subunit alpha</fullName>
        <shortName evidence="1">PEP</shortName>
        <ecNumber evidence="1">2.7.7.6</ecNumber>
    </recommendedName>
    <alternativeName>
        <fullName evidence="1">Plastid-encoded RNA polymerase subunit alpha</fullName>
        <shortName evidence="1">RNA polymerase subunit alpha</shortName>
    </alternativeName>
</protein>